<gene>
    <name evidence="1" type="primary">rpsD</name>
    <name type="ordered locus">SCH_3351</name>
</gene>
<dbReference type="EMBL" id="AE017220">
    <property type="protein sequence ID" value="AAX67257.1"/>
    <property type="molecule type" value="Genomic_DNA"/>
</dbReference>
<dbReference type="RefSeq" id="WP_000135226.1">
    <property type="nucleotide sequence ID" value="NC_006905.1"/>
</dbReference>
<dbReference type="SMR" id="Q57J55"/>
<dbReference type="GeneID" id="93035755"/>
<dbReference type="KEGG" id="sec:SCH_3351"/>
<dbReference type="HOGENOM" id="CLU_092403_0_2_6"/>
<dbReference type="Proteomes" id="UP000000538">
    <property type="component" value="Chromosome"/>
</dbReference>
<dbReference type="GO" id="GO:0015935">
    <property type="term" value="C:small ribosomal subunit"/>
    <property type="evidence" value="ECO:0007669"/>
    <property type="project" value="InterPro"/>
</dbReference>
<dbReference type="GO" id="GO:0019843">
    <property type="term" value="F:rRNA binding"/>
    <property type="evidence" value="ECO:0007669"/>
    <property type="project" value="UniProtKB-UniRule"/>
</dbReference>
<dbReference type="GO" id="GO:0003735">
    <property type="term" value="F:structural constituent of ribosome"/>
    <property type="evidence" value="ECO:0007669"/>
    <property type="project" value="InterPro"/>
</dbReference>
<dbReference type="GO" id="GO:0042274">
    <property type="term" value="P:ribosomal small subunit biogenesis"/>
    <property type="evidence" value="ECO:0007669"/>
    <property type="project" value="TreeGrafter"/>
</dbReference>
<dbReference type="GO" id="GO:0006412">
    <property type="term" value="P:translation"/>
    <property type="evidence" value="ECO:0007669"/>
    <property type="project" value="UniProtKB-UniRule"/>
</dbReference>
<dbReference type="CDD" id="cd00165">
    <property type="entry name" value="S4"/>
    <property type="match status" value="1"/>
</dbReference>
<dbReference type="FunFam" id="1.10.1050.10:FF:000001">
    <property type="entry name" value="30S ribosomal protein S4"/>
    <property type="match status" value="1"/>
</dbReference>
<dbReference type="FunFam" id="3.10.290.10:FF:000001">
    <property type="entry name" value="30S ribosomal protein S4"/>
    <property type="match status" value="1"/>
</dbReference>
<dbReference type="Gene3D" id="1.10.1050.10">
    <property type="entry name" value="Ribosomal Protein S4 Delta 41, Chain A, domain 1"/>
    <property type="match status" value="1"/>
</dbReference>
<dbReference type="Gene3D" id="3.10.290.10">
    <property type="entry name" value="RNA-binding S4 domain"/>
    <property type="match status" value="1"/>
</dbReference>
<dbReference type="HAMAP" id="MF_01306_B">
    <property type="entry name" value="Ribosomal_uS4_B"/>
    <property type="match status" value="1"/>
</dbReference>
<dbReference type="InterPro" id="IPR022801">
    <property type="entry name" value="Ribosomal_uS4"/>
</dbReference>
<dbReference type="InterPro" id="IPR005709">
    <property type="entry name" value="Ribosomal_uS4_bac-type"/>
</dbReference>
<dbReference type="InterPro" id="IPR018079">
    <property type="entry name" value="Ribosomal_uS4_CS"/>
</dbReference>
<dbReference type="InterPro" id="IPR001912">
    <property type="entry name" value="Ribosomal_uS4_N"/>
</dbReference>
<dbReference type="InterPro" id="IPR002942">
    <property type="entry name" value="S4_RNA-bd"/>
</dbReference>
<dbReference type="InterPro" id="IPR036986">
    <property type="entry name" value="S4_RNA-bd_sf"/>
</dbReference>
<dbReference type="NCBIfam" id="NF003717">
    <property type="entry name" value="PRK05327.1"/>
    <property type="match status" value="1"/>
</dbReference>
<dbReference type="NCBIfam" id="TIGR01017">
    <property type="entry name" value="rpsD_bact"/>
    <property type="match status" value="1"/>
</dbReference>
<dbReference type="PANTHER" id="PTHR11831">
    <property type="entry name" value="30S 40S RIBOSOMAL PROTEIN"/>
    <property type="match status" value="1"/>
</dbReference>
<dbReference type="PANTHER" id="PTHR11831:SF4">
    <property type="entry name" value="SMALL RIBOSOMAL SUBUNIT PROTEIN US4M"/>
    <property type="match status" value="1"/>
</dbReference>
<dbReference type="Pfam" id="PF00163">
    <property type="entry name" value="Ribosomal_S4"/>
    <property type="match status" value="1"/>
</dbReference>
<dbReference type="Pfam" id="PF01479">
    <property type="entry name" value="S4"/>
    <property type="match status" value="1"/>
</dbReference>
<dbReference type="SMART" id="SM01390">
    <property type="entry name" value="Ribosomal_S4"/>
    <property type="match status" value="1"/>
</dbReference>
<dbReference type="SMART" id="SM00363">
    <property type="entry name" value="S4"/>
    <property type="match status" value="1"/>
</dbReference>
<dbReference type="SUPFAM" id="SSF55174">
    <property type="entry name" value="Alpha-L RNA-binding motif"/>
    <property type="match status" value="1"/>
</dbReference>
<dbReference type="PROSITE" id="PS00632">
    <property type="entry name" value="RIBOSOMAL_S4"/>
    <property type="match status" value="1"/>
</dbReference>
<dbReference type="PROSITE" id="PS50889">
    <property type="entry name" value="S4"/>
    <property type="match status" value="1"/>
</dbReference>
<sequence>MARYLGPKLKLSRREGTDLFLKSGVRAIDTKCKIEQAPGQHGARKPRLSDYGVQLREKQKVRRIYGVLERQFRNYYKEAARLKGNTGENLLALLEGRLDNVVYRMGFGATRAEARQLVSHKAIMVNGRVVNIASYQVSPNDVVSIREKAKKQSRVKAALELAEQREKPTWLEVDAGKMEGTYKRKPERSDLSADINEHLIVELYSK</sequence>
<comment type="function">
    <text evidence="1">One of the primary rRNA binding proteins, it binds directly to 16S rRNA where it nucleates assembly of the body of the 30S subunit.</text>
</comment>
<comment type="function">
    <text evidence="1">With S5 and S12 plays an important role in translational accuracy.</text>
</comment>
<comment type="subunit">
    <text evidence="1">Part of the 30S ribosomal subunit. Contacts protein S5. The interaction surface between S4 and S5 is involved in control of translational fidelity.</text>
</comment>
<comment type="similarity">
    <text evidence="1">Belongs to the universal ribosomal protein uS4 family.</text>
</comment>
<reference key="1">
    <citation type="journal article" date="2005" name="Nucleic Acids Res.">
        <title>The genome sequence of Salmonella enterica serovar Choleraesuis, a highly invasive and resistant zoonotic pathogen.</title>
        <authorList>
            <person name="Chiu C.-H."/>
            <person name="Tang P."/>
            <person name="Chu C."/>
            <person name="Hu S."/>
            <person name="Bao Q."/>
            <person name="Yu J."/>
            <person name="Chou Y.-Y."/>
            <person name="Wang H.-S."/>
            <person name="Lee Y.-S."/>
        </authorList>
    </citation>
    <scope>NUCLEOTIDE SEQUENCE [LARGE SCALE GENOMIC DNA]</scope>
    <source>
        <strain>SC-B67</strain>
    </source>
</reference>
<protein>
    <recommendedName>
        <fullName evidence="1">Small ribosomal subunit protein uS4</fullName>
    </recommendedName>
    <alternativeName>
        <fullName evidence="2">30S ribosomal protein S4</fullName>
    </alternativeName>
</protein>
<feature type="chain" id="PRO_0000228923" description="Small ribosomal subunit protein uS4">
    <location>
        <begin position="1"/>
        <end position="206"/>
    </location>
</feature>
<feature type="domain" description="S4 RNA-binding" evidence="1">
    <location>
        <begin position="96"/>
        <end position="156"/>
    </location>
</feature>
<evidence type="ECO:0000255" key="1">
    <source>
        <dbReference type="HAMAP-Rule" id="MF_01306"/>
    </source>
</evidence>
<evidence type="ECO:0000305" key="2"/>
<accession>Q57J55</accession>
<keyword id="KW-0687">Ribonucleoprotein</keyword>
<keyword id="KW-0689">Ribosomal protein</keyword>
<keyword id="KW-0694">RNA-binding</keyword>
<keyword id="KW-0699">rRNA-binding</keyword>
<proteinExistence type="inferred from homology"/>
<organism>
    <name type="scientific">Salmonella choleraesuis (strain SC-B67)</name>
    <dbReference type="NCBI Taxonomy" id="321314"/>
    <lineage>
        <taxon>Bacteria</taxon>
        <taxon>Pseudomonadati</taxon>
        <taxon>Pseudomonadota</taxon>
        <taxon>Gammaproteobacteria</taxon>
        <taxon>Enterobacterales</taxon>
        <taxon>Enterobacteriaceae</taxon>
        <taxon>Salmonella</taxon>
    </lineage>
</organism>
<name>RS4_SALCH</name>